<evidence type="ECO:0000255" key="1">
    <source>
        <dbReference type="HAMAP-Rule" id="MF_01202"/>
    </source>
</evidence>
<keyword id="KW-0274">FAD</keyword>
<keyword id="KW-0285">Flavoprotein</keyword>
<keyword id="KW-0560">Oxidoreductase</keyword>
<keyword id="KW-1185">Reference proteome</keyword>
<accession>Q1QXY5</accession>
<dbReference type="EC" id="1.4.99.-" evidence="1"/>
<dbReference type="EMBL" id="CP000285">
    <property type="protein sequence ID" value="ABE58673.1"/>
    <property type="molecule type" value="Genomic_DNA"/>
</dbReference>
<dbReference type="RefSeq" id="WP_011506619.1">
    <property type="nucleotide sequence ID" value="NC_007963.1"/>
</dbReference>
<dbReference type="SMR" id="Q1QXY5"/>
<dbReference type="STRING" id="290398.Csal_1318"/>
<dbReference type="GeneID" id="95334056"/>
<dbReference type="KEGG" id="csa:Csal_1318"/>
<dbReference type="eggNOG" id="COG0665">
    <property type="taxonomic scope" value="Bacteria"/>
</dbReference>
<dbReference type="HOGENOM" id="CLU_007884_9_2_6"/>
<dbReference type="OrthoDB" id="9805337at2"/>
<dbReference type="UniPathway" id="UPA00043">
    <property type="reaction ID" value="UER00498"/>
</dbReference>
<dbReference type="Proteomes" id="UP000000239">
    <property type="component" value="Chromosome"/>
</dbReference>
<dbReference type="GO" id="GO:0005737">
    <property type="term" value="C:cytoplasm"/>
    <property type="evidence" value="ECO:0007669"/>
    <property type="project" value="TreeGrafter"/>
</dbReference>
<dbReference type="GO" id="GO:0005886">
    <property type="term" value="C:plasma membrane"/>
    <property type="evidence" value="ECO:0007669"/>
    <property type="project" value="TreeGrafter"/>
</dbReference>
<dbReference type="GO" id="GO:0008718">
    <property type="term" value="F:D-amino-acid dehydrogenase activity"/>
    <property type="evidence" value="ECO:0007669"/>
    <property type="project" value="UniProtKB-UniRule"/>
</dbReference>
<dbReference type="GO" id="GO:0055130">
    <property type="term" value="P:D-alanine catabolic process"/>
    <property type="evidence" value="ECO:0007669"/>
    <property type="project" value="UniProtKB-UniPathway"/>
</dbReference>
<dbReference type="FunFam" id="3.50.50.60:FF:000020">
    <property type="entry name" value="D-amino acid dehydrogenase"/>
    <property type="match status" value="1"/>
</dbReference>
<dbReference type="Gene3D" id="3.30.9.10">
    <property type="entry name" value="D-Amino Acid Oxidase, subunit A, domain 2"/>
    <property type="match status" value="1"/>
</dbReference>
<dbReference type="Gene3D" id="3.50.50.60">
    <property type="entry name" value="FAD/NAD(P)-binding domain"/>
    <property type="match status" value="2"/>
</dbReference>
<dbReference type="HAMAP" id="MF_01202">
    <property type="entry name" value="DadA"/>
    <property type="match status" value="1"/>
</dbReference>
<dbReference type="InterPro" id="IPR023080">
    <property type="entry name" value="DadA"/>
</dbReference>
<dbReference type="InterPro" id="IPR006076">
    <property type="entry name" value="FAD-dep_OxRdtase"/>
</dbReference>
<dbReference type="InterPro" id="IPR036188">
    <property type="entry name" value="FAD/NAD-bd_sf"/>
</dbReference>
<dbReference type="NCBIfam" id="NF001933">
    <property type="entry name" value="PRK00711.1"/>
    <property type="match status" value="1"/>
</dbReference>
<dbReference type="PANTHER" id="PTHR13847:SF280">
    <property type="entry name" value="D-AMINO ACID DEHYDROGENASE"/>
    <property type="match status" value="1"/>
</dbReference>
<dbReference type="PANTHER" id="PTHR13847">
    <property type="entry name" value="SARCOSINE DEHYDROGENASE-RELATED"/>
    <property type="match status" value="1"/>
</dbReference>
<dbReference type="Pfam" id="PF01266">
    <property type="entry name" value="DAO"/>
    <property type="match status" value="1"/>
</dbReference>
<dbReference type="SUPFAM" id="SSF54373">
    <property type="entry name" value="FAD-linked reductases, C-terminal domain"/>
    <property type="match status" value="1"/>
</dbReference>
<dbReference type="SUPFAM" id="SSF51905">
    <property type="entry name" value="FAD/NAD(P)-binding domain"/>
    <property type="match status" value="1"/>
</dbReference>
<organism>
    <name type="scientific">Chromohalobacter salexigens (strain ATCC BAA-138 / DSM 3043 / CIP 106854 / NCIMB 13768 / 1H11)</name>
    <dbReference type="NCBI Taxonomy" id="290398"/>
    <lineage>
        <taxon>Bacteria</taxon>
        <taxon>Pseudomonadati</taxon>
        <taxon>Pseudomonadota</taxon>
        <taxon>Gammaproteobacteria</taxon>
        <taxon>Oceanospirillales</taxon>
        <taxon>Halomonadaceae</taxon>
        <taxon>Chromohalobacter</taxon>
    </lineage>
</organism>
<gene>
    <name evidence="1" type="primary">dadA</name>
    <name type="ordered locus">Csal_1318</name>
</gene>
<reference key="1">
    <citation type="journal article" date="2011" name="Stand. Genomic Sci.">
        <title>Complete genome sequence of the halophilic and highly halotolerant Chromohalobacter salexigens type strain (1H11(T)).</title>
        <authorList>
            <person name="Copeland A."/>
            <person name="O'Connor K."/>
            <person name="Lucas S."/>
            <person name="Lapidus A."/>
            <person name="Berry K.W."/>
            <person name="Detter J.C."/>
            <person name="Del Rio T.G."/>
            <person name="Hammon N."/>
            <person name="Dalin E."/>
            <person name="Tice H."/>
            <person name="Pitluck S."/>
            <person name="Bruce D."/>
            <person name="Goodwin L."/>
            <person name="Han C."/>
            <person name="Tapia R."/>
            <person name="Saunders E."/>
            <person name="Schmutz J."/>
            <person name="Brettin T."/>
            <person name="Larimer F."/>
            <person name="Land M."/>
            <person name="Hauser L."/>
            <person name="Vargas C."/>
            <person name="Nieto J.J."/>
            <person name="Kyrpides N.C."/>
            <person name="Ivanova N."/>
            <person name="Goker M."/>
            <person name="Klenk H.P."/>
            <person name="Csonka L.N."/>
            <person name="Woyke T."/>
        </authorList>
    </citation>
    <scope>NUCLEOTIDE SEQUENCE [LARGE SCALE GENOMIC DNA]</scope>
    <source>
        <strain>ATCC BAA-138 / DSM 3043 / CIP 106854 / NCIMB 13768 / 1H11</strain>
    </source>
</reference>
<protein>
    <recommendedName>
        <fullName evidence="1">D-amino acid dehydrogenase</fullName>
        <ecNumber evidence="1">1.4.99.-</ecNumber>
    </recommendedName>
</protein>
<feature type="chain" id="PRO_1000066087" description="D-amino acid dehydrogenase">
    <location>
        <begin position="1"/>
        <end position="419"/>
    </location>
</feature>
<feature type="binding site" evidence="1">
    <location>
        <begin position="3"/>
        <end position="17"/>
    </location>
    <ligand>
        <name>FAD</name>
        <dbReference type="ChEBI" id="CHEBI:57692"/>
    </ligand>
</feature>
<name>DADA_CHRSD</name>
<proteinExistence type="inferred from homology"/>
<comment type="function">
    <text evidence="1">Oxidative deamination of D-amino acids.</text>
</comment>
<comment type="catalytic activity">
    <reaction evidence="1">
        <text>a D-alpha-amino acid + A + H2O = a 2-oxocarboxylate + AH2 + NH4(+)</text>
        <dbReference type="Rhea" id="RHEA:18125"/>
        <dbReference type="ChEBI" id="CHEBI:13193"/>
        <dbReference type="ChEBI" id="CHEBI:15377"/>
        <dbReference type="ChEBI" id="CHEBI:17499"/>
        <dbReference type="ChEBI" id="CHEBI:28938"/>
        <dbReference type="ChEBI" id="CHEBI:35179"/>
        <dbReference type="ChEBI" id="CHEBI:59871"/>
    </reaction>
</comment>
<comment type="cofactor">
    <cofactor evidence="1">
        <name>FAD</name>
        <dbReference type="ChEBI" id="CHEBI:57692"/>
    </cofactor>
</comment>
<comment type="pathway">
    <text>Amino-acid degradation; D-alanine degradation; NH(3) and pyruvate from D-alanine: step 1/1.</text>
</comment>
<comment type="similarity">
    <text evidence="1">Belongs to the DadA oxidoreductase family.</text>
</comment>
<sequence length="419" mass="46286">MQVLILGSGVVGVTSAYYLATQGHEVTVVDRREAPAMETSYGNAGQVSFGFSSPWAAPGIPRKALKWMFQEHAPLKIQPKRDPAMARFMMAMFNNCTPERYAVNKERMVRVAEYSRQCIDALRRDTGIRYEDRQRGLLQLFRHESQVEAAGKDMRVLSECGVRHRLLGAEELVTAEPALARVPGKFVGGLHLPDDQTGDCHLFTQRLAEHCREHLGVTFRFGVDVQRIERQAGRVERVVTSAGSLRADAYVVCLGSFSPLLVKDLDIRLPIYPVKGYSLTLPVTDDGGAPQSTVMDETFKVAISRFDDRIRVGGTAELASYDLSLLEKRRATISMVVRDVFPEGGDAAKAEFWTGLRPMTPDSTPIIGATRYDNLWLNTGHGTLGWTMSCGSAHLLADLMAGRRPAIDPIGLDVSRYAA</sequence>